<feature type="signal peptide" evidence="3">
    <location>
        <begin position="1"/>
        <end position="20"/>
    </location>
</feature>
<feature type="chain" id="PRO_0000015453" description="Interleukin-1 receptor accessory protein">
    <location>
        <begin position="21"/>
        <end position="570"/>
    </location>
</feature>
<feature type="topological domain" description="Extracellular" evidence="3">
    <location>
        <begin position="21"/>
        <end position="367"/>
    </location>
</feature>
<feature type="transmembrane region" description="Helical" evidence="3">
    <location>
        <begin position="368"/>
        <end position="388"/>
    </location>
</feature>
<feature type="topological domain" description="Cytoplasmic" evidence="3">
    <location>
        <begin position="389"/>
        <end position="570"/>
    </location>
</feature>
<feature type="domain" description="Ig-like C2-type 1">
    <location>
        <begin position="21"/>
        <end position="128"/>
    </location>
</feature>
<feature type="domain" description="Ig-like C2-type 2">
    <location>
        <begin position="141"/>
        <end position="230"/>
    </location>
</feature>
<feature type="domain" description="Ig-like C2-type 3">
    <location>
        <begin position="243"/>
        <end position="348"/>
    </location>
</feature>
<feature type="domain" description="TIR" evidence="5">
    <location>
        <begin position="403"/>
        <end position="546"/>
    </location>
</feature>
<feature type="region of interest" description="Essential for interaction with PTPRD" evidence="1">
    <location>
        <begin position="69"/>
        <end position="85"/>
    </location>
</feature>
<feature type="region of interest" description="Disordered" evidence="6">
    <location>
        <begin position="550"/>
        <end position="570"/>
    </location>
</feature>
<feature type="compositionally biased region" description="Polar residues" evidence="6">
    <location>
        <begin position="553"/>
        <end position="570"/>
    </location>
</feature>
<feature type="active site" evidence="5">
    <location>
        <position position="482"/>
    </location>
</feature>
<feature type="modified residue" description="Phosphoserine" evidence="2">
    <location>
        <position position="557"/>
    </location>
</feature>
<feature type="glycosylation site" description="N-linked (GlcNAc...) asparagine" evidence="3">
    <location>
        <position position="57"/>
    </location>
</feature>
<feature type="glycosylation site" description="N-linked (GlcNAc...) asparagine" evidence="3">
    <location>
        <position position="107"/>
    </location>
</feature>
<feature type="glycosylation site" description="N-linked (GlcNAc...) asparagine" evidence="3">
    <location>
        <position position="111"/>
    </location>
</feature>
<feature type="glycosylation site" description="N-linked (GlcNAc...) asparagine" evidence="3">
    <location>
        <position position="118"/>
    </location>
</feature>
<feature type="glycosylation site" description="N-linked (GlcNAc...) asparagine" evidence="3">
    <location>
        <position position="157"/>
    </location>
</feature>
<feature type="glycosylation site" description="N-linked (GlcNAc...) asparagine" evidence="3">
    <location>
        <position position="196"/>
    </location>
</feature>
<feature type="glycosylation site" description="N-linked (GlcNAc...) asparagine" evidence="3">
    <location>
        <position position="209"/>
    </location>
</feature>
<feature type="disulfide bond" evidence="4">
    <location>
        <begin position="24"/>
        <end position="122"/>
    </location>
</feature>
<feature type="disulfide bond" evidence="4">
    <location>
        <begin position="47"/>
        <end position="114"/>
    </location>
</feature>
<feature type="disulfide bond" evidence="4">
    <location>
        <begin position="137"/>
        <end position="181"/>
    </location>
</feature>
<feature type="disulfide bond" evidence="4">
    <location>
        <begin position="160"/>
        <end position="212"/>
    </location>
</feature>
<feature type="disulfide bond" evidence="4">
    <location>
        <begin position="266"/>
        <end position="332"/>
    </location>
</feature>
<proteinExistence type="evidence at transcript level"/>
<keyword id="KW-1015">Disulfide bond</keyword>
<keyword id="KW-0325">Glycoprotein</keyword>
<keyword id="KW-0378">Hydrolase</keyword>
<keyword id="KW-0393">Immunoglobulin domain</keyword>
<keyword id="KW-0395">Inflammatory response</keyword>
<keyword id="KW-0472">Membrane</keyword>
<keyword id="KW-0520">NAD</keyword>
<keyword id="KW-0597">Phosphoprotein</keyword>
<keyword id="KW-0675">Receptor</keyword>
<keyword id="KW-1185">Reference proteome</keyword>
<keyword id="KW-0677">Repeat</keyword>
<keyword id="KW-0732">Signal</keyword>
<keyword id="KW-0812">Transmembrane</keyword>
<keyword id="KW-1133">Transmembrane helix</keyword>
<name>IL1AP_RAT</name>
<protein>
    <recommendedName>
        <fullName>Interleukin-1 receptor accessory protein</fullName>
        <shortName>IL-1 receptor accessory protein</shortName>
        <shortName>IL-1RAcP</shortName>
        <ecNumber evidence="5">3.2.2.6</ecNumber>
    </recommendedName>
</protein>
<accession>Q63621</accession>
<dbReference type="EC" id="3.2.2.6" evidence="5"/>
<dbReference type="EMBL" id="U48592">
    <property type="protein sequence ID" value="AAB03502.1"/>
    <property type="molecule type" value="mRNA"/>
</dbReference>
<dbReference type="RefSeq" id="NP_037100.1">
    <property type="nucleotide sequence ID" value="NM_012968.1"/>
</dbReference>
<dbReference type="SMR" id="Q63621"/>
<dbReference type="BioGRID" id="247499">
    <property type="interactions" value="2"/>
</dbReference>
<dbReference type="FunCoup" id="Q63621">
    <property type="interactions" value="1038"/>
</dbReference>
<dbReference type="IntAct" id="Q63621">
    <property type="interactions" value="1"/>
</dbReference>
<dbReference type="MINT" id="Q63621"/>
<dbReference type="STRING" id="10116.ENSRNOP00000051260"/>
<dbReference type="GlyCosmos" id="Q63621">
    <property type="glycosylation" value="7 sites, No reported glycans"/>
</dbReference>
<dbReference type="GlyGen" id="Q63621">
    <property type="glycosylation" value="7 sites"/>
</dbReference>
<dbReference type="PhosphoSitePlus" id="Q63621"/>
<dbReference type="GeneID" id="25466"/>
<dbReference type="KEGG" id="rno:25466"/>
<dbReference type="UCSC" id="RGD:2893">
    <property type="organism name" value="rat"/>
</dbReference>
<dbReference type="AGR" id="RGD:2893"/>
<dbReference type="CTD" id="3556"/>
<dbReference type="RGD" id="2893">
    <property type="gene designation" value="Il1rap"/>
</dbReference>
<dbReference type="InParanoid" id="Q63621"/>
<dbReference type="PhylomeDB" id="Q63621"/>
<dbReference type="Reactome" id="R-RNO-1257604">
    <property type="pathway name" value="PIP3 activates AKT signaling"/>
</dbReference>
<dbReference type="Reactome" id="R-RNO-388844">
    <property type="pathway name" value="Receptor-type tyrosine-protein phosphatases"/>
</dbReference>
<dbReference type="Reactome" id="R-RNO-6811558">
    <property type="pathway name" value="PI5P, PP2A and IER3 Regulate PI3K/AKT Signaling"/>
</dbReference>
<dbReference type="Reactome" id="R-RNO-9014826">
    <property type="pathway name" value="Interleukin-36 pathway"/>
</dbReference>
<dbReference type="Reactome" id="R-RNO-9014843">
    <property type="pathway name" value="Interleukin-33 signaling"/>
</dbReference>
<dbReference type="Reactome" id="R-RNO-9020702">
    <property type="pathway name" value="Interleukin-1 signaling"/>
</dbReference>
<dbReference type="PRO" id="PR:Q63621"/>
<dbReference type="Proteomes" id="UP000002494">
    <property type="component" value="Unplaced"/>
</dbReference>
<dbReference type="GO" id="GO:0009986">
    <property type="term" value="C:cell surface"/>
    <property type="evidence" value="ECO:0000318"/>
    <property type="project" value="GO_Central"/>
</dbReference>
<dbReference type="GO" id="GO:0098978">
    <property type="term" value="C:glutamatergic synapse"/>
    <property type="evidence" value="ECO:0000266"/>
    <property type="project" value="RGD"/>
</dbReference>
<dbReference type="GO" id="GO:0005886">
    <property type="term" value="C:plasma membrane"/>
    <property type="evidence" value="ECO:0000318"/>
    <property type="project" value="GO_Central"/>
</dbReference>
<dbReference type="GO" id="GO:0032991">
    <property type="term" value="C:protein-containing complex"/>
    <property type="evidence" value="ECO:0000314"/>
    <property type="project" value="RGD"/>
</dbReference>
<dbReference type="GO" id="GO:0045202">
    <property type="term" value="C:synapse"/>
    <property type="evidence" value="ECO:0000266"/>
    <property type="project" value="RGD"/>
</dbReference>
<dbReference type="GO" id="GO:0015026">
    <property type="term" value="F:coreceptor activity"/>
    <property type="evidence" value="ECO:0000266"/>
    <property type="project" value="RGD"/>
</dbReference>
<dbReference type="GO" id="GO:0019966">
    <property type="term" value="F:interleukin-1 binding"/>
    <property type="evidence" value="ECO:0000304"/>
    <property type="project" value="RGD"/>
</dbReference>
<dbReference type="GO" id="GO:0004908">
    <property type="term" value="F:interleukin-1 receptor activity"/>
    <property type="evidence" value="ECO:0000266"/>
    <property type="project" value="RGD"/>
</dbReference>
<dbReference type="GO" id="GO:0005149">
    <property type="term" value="F:interleukin-1 receptor binding"/>
    <property type="evidence" value="ECO:0000353"/>
    <property type="project" value="RGD"/>
</dbReference>
<dbReference type="GO" id="GO:0002114">
    <property type="term" value="F:interleukin-33 receptor activity"/>
    <property type="evidence" value="ECO:0000266"/>
    <property type="project" value="RGD"/>
</dbReference>
<dbReference type="GO" id="GO:0061809">
    <property type="term" value="F:NAD+ nucleosidase activity, cyclic ADP-ribose generating"/>
    <property type="evidence" value="ECO:0007669"/>
    <property type="project" value="UniProtKB-EC"/>
</dbReference>
<dbReference type="GO" id="GO:0030674">
    <property type="term" value="F:protein-macromolecule adaptor activity"/>
    <property type="evidence" value="ECO:0000304"/>
    <property type="project" value="RGD"/>
</dbReference>
<dbReference type="GO" id="GO:0019221">
    <property type="term" value="P:cytokine-mediated signaling pathway"/>
    <property type="evidence" value="ECO:0000266"/>
    <property type="project" value="RGD"/>
</dbReference>
<dbReference type="GO" id="GO:0006954">
    <property type="term" value="P:inflammatory response"/>
    <property type="evidence" value="ECO:0007669"/>
    <property type="project" value="UniProtKB-KW"/>
</dbReference>
<dbReference type="GO" id="GO:0070498">
    <property type="term" value="P:interleukin-1-mediated signaling pathway"/>
    <property type="evidence" value="ECO:0000266"/>
    <property type="project" value="RGD"/>
</dbReference>
<dbReference type="GO" id="GO:0038172">
    <property type="term" value="P:interleukin-33-mediated signaling pathway"/>
    <property type="evidence" value="ECO:0000266"/>
    <property type="project" value="RGD"/>
</dbReference>
<dbReference type="GO" id="GO:0032736">
    <property type="term" value="P:positive regulation of interleukin-13 production"/>
    <property type="evidence" value="ECO:0000266"/>
    <property type="project" value="RGD"/>
</dbReference>
<dbReference type="GO" id="GO:0032753">
    <property type="term" value="P:positive regulation of interleukin-4 production"/>
    <property type="evidence" value="ECO:0000266"/>
    <property type="project" value="RGD"/>
</dbReference>
<dbReference type="GO" id="GO:0032754">
    <property type="term" value="P:positive regulation of interleukin-5 production"/>
    <property type="evidence" value="ECO:0000266"/>
    <property type="project" value="RGD"/>
</dbReference>
<dbReference type="GO" id="GO:0032755">
    <property type="term" value="P:positive regulation of interleukin-6 production"/>
    <property type="evidence" value="ECO:0000266"/>
    <property type="project" value="RGD"/>
</dbReference>
<dbReference type="GO" id="GO:0051965">
    <property type="term" value="P:positive regulation of synapse assembly"/>
    <property type="evidence" value="ECO:0000250"/>
    <property type="project" value="UniProtKB"/>
</dbReference>
<dbReference type="GO" id="GO:0099151">
    <property type="term" value="P:regulation of postsynaptic density assembly"/>
    <property type="evidence" value="ECO:0000266"/>
    <property type="project" value="RGD"/>
</dbReference>
<dbReference type="GO" id="GO:1905606">
    <property type="term" value="P:regulation of presynapse assembly"/>
    <property type="evidence" value="ECO:0000266"/>
    <property type="project" value="RGD"/>
</dbReference>
<dbReference type="GO" id="GO:0099560">
    <property type="term" value="P:synaptic membrane adhesion"/>
    <property type="evidence" value="ECO:0000266"/>
    <property type="project" value="RGD"/>
</dbReference>
<dbReference type="GO" id="GO:0099545">
    <property type="term" value="P:trans-synaptic signaling by trans-synaptic complex"/>
    <property type="evidence" value="ECO:0000266"/>
    <property type="project" value="RGD"/>
</dbReference>
<dbReference type="CDD" id="cd20992">
    <property type="entry name" value="Ig1_IL1R_like"/>
    <property type="match status" value="1"/>
</dbReference>
<dbReference type="CDD" id="cd20931">
    <property type="entry name" value="Ig3_IL1RAP"/>
    <property type="match status" value="1"/>
</dbReference>
<dbReference type="FunFam" id="2.60.40.10:FF:000462">
    <property type="entry name" value="Interleukin 1 receptor accessory protein"/>
    <property type="match status" value="1"/>
</dbReference>
<dbReference type="FunFam" id="2.60.40.10:FF:000634">
    <property type="entry name" value="Interleukin 1 receptor accessory protein"/>
    <property type="match status" value="1"/>
</dbReference>
<dbReference type="FunFam" id="2.60.40.10:FF:000756">
    <property type="entry name" value="Interleukin 1 receptor accessory protein"/>
    <property type="match status" value="1"/>
</dbReference>
<dbReference type="FunFam" id="3.40.50.10140:FF:000002">
    <property type="entry name" value="Interleukin 1 receptor accessory protein"/>
    <property type="match status" value="1"/>
</dbReference>
<dbReference type="Gene3D" id="2.60.40.10">
    <property type="entry name" value="Immunoglobulins"/>
    <property type="match status" value="3"/>
</dbReference>
<dbReference type="Gene3D" id="3.40.50.10140">
    <property type="entry name" value="Toll/interleukin-1 receptor homology (TIR) domain"/>
    <property type="match status" value="1"/>
</dbReference>
<dbReference type="InterPro" id="IPR007110">
    <property type="entry name" value="Ig-like_dom"/>
</dbReference>
<dbReference type="InterPro" id="IPR036179">
    <property type="entry name" value="Ig-like_dom_sf"/>
</dbReference>
<dbReference type="InterPro" id="IPR013783">
    <property type="entry name" value="Ig-like_fold"/>
</dbReference>
<dbReference type="InterPro" id="IPR003599">
    <property type="entry name" value="Ig_sub"/>
</dbReference>
<dbReference type="InterPro" id="IPR015621">
    <property type="entry name" value="IL-1_rcpt_fam"/>
</dbReference>
<dbReference type="InterPro" id="IPR004074">
    <property type="entry name" value="IL-1_rcpt_I/II-typ"/>
</dbReference>
<dbReference type="InterPro" id="IPR041416">
    <property type="entry name" value="IL-1RAcP-like_ig"/>
</dbReference>
<dbReference type="InterPro" id="IPR000157">
    <property type="entry name" value="TIR_dom"/>
</dbReference>
<dbReference type="InterPro" id="IPR035897">
    <property type="entry name" value="Toll_tir_struct_dom_sf"/>
</dbReference>
<dbReference type="PANTHER" id="PTHR11890:SF20">
    <property type="entry name" value="INTERLEUKIN-1 RECEPTOR ACCESSORY PROTEIN"/>
    <property type="match status" value="1"/>
</dbReference>
<dbReference type="PANTHER" id="PTHR11890">
    <property type="entry name" value="INTERLEUKIN-1 RECEPTOR FAMILY MEMBER"/>
    <property type="match status" value="1"/>
</dbReference>
<dbReference type="Pfam" id="PF13895">
    <property type="entry name" value="Ig_2"/>
    <property type="match status" value="1"/>
</dbReference>
<dbReference type="Pfam" id="PF13927">
    <property type="entry name" value="Ig_3"/>
    <property type="match status" value="1"/>
</dbReference>
<dbReference type="Pfam" id="PF18452">
    <property type="entry name" value="Ig_6"/>
    <property type="match status" value="1"/>
</dbReference>
<dbReference type="Pfam" id="PF01582">
    <property type="entry name" value="TIR"/>
    <property type="match status" value="1"/>
</dbReference>
<dbReference type="PRINTS" id="PR01536">
    <property type="entry name" value="INTRLKN1R12F"/>
</dbReference>
<dbReference type="PRINTS" id="PR01537">
    <property type="entry name" value="INTRLKN1R1F"/>
</dbReference>
<dbReference type="SMART" id="SM00409">
    <property type="entry name" value="IG"/>
    <property type="match status" value="3"/>
</dbReference>
<dbReference type="SMART" id="SM00255">
    <property type="entry name" value="TIR"/>
    <property type="match status" value="1"/>
</dbReference>
<dbReference type="SUPFAM" id="SSF48726">
    <property type="entry name" value="Immunoglobulin"/>
    <property type="match status" value="3"/>
</dbReference>
<dbReference type="SUPFAM" id="SSF52200">
    <property type="entry name" value="Toll/Interleukin receptor TIR domain"/>
    <property type="match status" value="1"/>
</dbReference>
<dbReference type="PROSITE" id="PS50835">
    <property type="entry name" value="IG_LIKE"/>
    <property type="match status" value="2"/>
</dbReference>
<dbReference type="PROSITE" id="PS50104">
    <property type="entry name" value="TIR"/>
    <property type="match status" value="1"/>
</dbReference>
<gene>
    <name type="primary">Il1rap</name>
</gene>
<sequence>MGLPWCLMSLFFCGILQSHASERCDDWGLDTMRQIQVFEDEPARIKCPLFEHFLKYNYSTAHSSGLTLIWYWTRQDRDLEEPINFRLPENRISKEKDVLWFRPTLLNDTGNYTCMLRNTTYCSKVAFPLEVVQKDSCFNSPMRLPVHRLYIEQGIHNITCPNVDGYFPSSVKPSVTWYKGCTEIVNFHNVQPKGMNLSFFIPLVSNNGNYTCVVTYLENGRLFHLTRTMTVKVVGSPKDAVPPHIYSPNDRVVYEKEPGEELVIPCKVYFSFIMDSHNEIWWTIDGKKPDDVPVDITIIESVSYSSTEDETRTQILSIKKVTPEDLKRNYVCHARNAEGEAEQAAKVKQKVIPPRYTVELACGFGATVFLVVVLIVVYHVYWLEMVLFYRAHFGTDETILDGKEYDIYVSYARNAEEEEFVLLTLRGVLENEFGYKLCIFDRDSFPGGIVTDETLSFIQKSRRLLVVLSPNYVLQGTQALLELKAGLENMASRGNINVILVQYKAVKDLKVKELKRAKSVLTVIKWKGEKSKYPQGRFWKQLQVAMPVKKSPRWSSSDKQGLSYSSLKNV</sequence>
<organism>
    <name type="scientific">Rattus norvegicus</name>
    <name type="common">Rat</name>
    <dbReference type="NCBI Taxonomy" id="10116"/>
    <lineage>
        <taxon>Eukaryota</taxon>
        <taxon>Metazoa</taxon>
        <taxon>Chordata</taxon>
        <taxon>Craniata</taxon>
        <taxon>Vertebrata</taxon>
        <taxon>Euteleostomi</taxon>
        <taxon>Mammalia</taxon>
        <taxon>Eutheria</taxon>
        <taxon>Euarchontoglires</taxon>
        <taxon>Glires</taxon>
        <taxon>Rodentia</taxon>
        <taxon>Myomorpha</taxon>
        <taxon>Muroidea</taxon>
        <taxon>Muridae</taxon>
        <taxon>Murinae</taxon>
        <taxon>Rattus</taxon>
    </lineage>
</organism>
<comment type="function">
    <text evidence="1 2">Coreceptor for IL1RL2 in the IL-36 signaling system (By similarity). Coreceptor with IL1R1 in the IL-1 signaling system. Associates with IL1R1 bound to IL1B to form the high affinity interleukin-1 receptor complex which mediates interleukin-1-dependent activation of NF-kappa-B and other pathways. Signaling involves the recruitment of adapter molecules such as TOLLIP, MYD88, and IRAK1 or IRAK2 via the respective TIR domains of the receptor/coreceptor subunits. Recruits TOLLIP to the signaling complex. Does not bind to interleukin-1 alone; binding of IL1RN to IL1R1, prevents its association with IL1R1 to form a signaling complex. The cellular response is modulated through a non-signaling association with the membrane IL1R2 decoy receptor. Coreceptor for IL1RL1 in the IL-33 signaling system (By similarity). Can bidirectionally induce pre- and postsynaptic differentiation of neurons by trans-synaptically binding to PTPRD (By similarity). May play a role in IL1B-mediated costimulation of IFNG production from T-helper 1 (Th1) cells (By similarity).</text>
</comment>
<comment type="catalytic activity">
    <reaction evidence="5">
        <text>NAD(+) + H2O = ADP-D-ribose + nicotinamide + H(+)</text>
        <dbReference type="Rhea" id="RHEA:16301"/>
        <dbReference type="ChEBI" id="CHEBI:15377"/>
        <dbReference type="ChEBI" id="CHEBI:15378"/>
        <dbReference type="ChEBI" id="CHEBI:17154"/>
        <dbReference type="ChEBI" id="CHEBI:57540"/>
        <dbReference type="ChEBI" id="CHEBI:57967"/>
        <dbReference type="EC" id="3.2.2.6"/>
    </reaction>
    <physiologicalReaction direction="left-to-right" evidence="5">
        <dbReference type="Rhea" id="RHEA:16302"/>
    </physiologicalReaction>
</comment>
<comment type="subunit">
    <text evidence="1 2">The interleukin-36 receptor complex is a heterodimer of IL1RL2 and IL1RAP; the association is inhibited by IL36RN (By similarity). The interleukin-1 receptor complex is a heterodimer of IL1R1 and IL1RAP. Associates with IL1R2 to form a non-signaling interleukin-1 receptor complex (By similarity). Interacts with IL-33-bound IL1RL1 to form the minimal interleukin-33 signaling complex with a 1:1:1 stoichiometry. Interacts with KIT (independently of stimulation with KITLG/SCF). A mast cell-specific KITLG/SCF-induced interleukin-33 signaling complex contains IL1RL1, IL1RAP, KIT and MYD88 (By similarity). Interacts (via the first immunoglobilin domain) with PTPRD (via the third immunoglobilin domain); induces pre- and postsynaptic differentiation of neurons (By similarity).</text>
</comment>
<comment type="subcellular location">
    <subcellularLocation>
        <location>Membrane</location>
        <topology>Single-pass type I membrane protein</topology>
    </subcellularLocation>
</comment>
<comment type="tissue specificity">
    <text evidence="7">Highly expressed in hypothalamus, in the dentate gyrus of hippocampus, cerebral cortex, cerebellum, liver and lung.</text>
</comment>
<comment type="domain">
    <text evidence="5">The TIR domain mediates NAD(+) hydrolase (NADase) activity. Self-association of TIR domains is required for NADase activity.</text>
</comment>
<comment type="similarity">
    <text evidence="8">Belongs to the interleukin-1 receptor family.</text>
</comment>
<reference key="1">
    <citation type="journal article" date="1996" name="J. Neuroimmunol.">
        <title>Rat homolog of mouse interleukin-1 receptor accessory protein: cloning, localization and modulation studies.</title>
        <authorList>
            <person name="Liu C."/>
            <person name="Chalmers D."/>
            <person name="Maki R."/>
            <person name="De Souza E.B."/>
        </authorList>
    </citation>
    <scope>NUCLEOTIDE SEQUENCE [MRNA]</scope>
    <scope>TISSUE SPECIFICITY</scope>
    <source>
        <tissue>Cervical ganglion</tissue>
    </source>
</reference>
<evidence type="ECO:0000250" key="1">
    <source>
        <dbReference type="UniProtKB" id="Q61730"/>
    </source>
</evidence>
<evidence type="ECO:0000250" key="2">
    <source>
        <dbReference type="UniProtKB" id="Q9NPH3"/>
    </source>
</evidence>
<evidence type="ECO:0000255" key="3"/>
<evidence type="ECO:0000255" key="4">
    <source>
        <dbReference type="PROSITE-ProRule" id="PRU00114"/>
    </source>
</evidence>
<evidence type="ECO:0000255" key="5">
    <source>
        <dbReference type="PROSITE-ProRule" id="PRU00204"/>
    </source>
</evidence>
<evidence type="ECO:0000256" key="6">
    <source>
        <dbReference type="SAM" id="MobiDB-lite"/>
    </source>
</evidence>
<evidence type="ECO:0000269" key="7">
    <source>
    </source>
</evidence>
<evidence type="ECO:0000305" key="8"/>